<sequence length="172" mass="18986">MAGSVADSDAVVKLDDGHLNNSLSSPVQADVYFPRLIVPFCGHIKGGMRPGKKVLVMGIVDLNPESFAISLTCGDSEDPPADVAIELKAVFTDRQLLRNSCISGERGEEQSAIPYFPFIPDQPFRVEILCEHPRFRVFVDGHQLFDFYHRIQTLSAIDTIKINGDLQITKLG</sequence>
<proteinExistence type="evidence at transcript level"/>
<name>LEGL_PONAB</name>
<dbReference type="EMBL" id="CR860852">
    <property type="protein sequence ID" value="CAH92960.1"/>
    <property type="molecule type" value="mRNA"/>
</dbReference>
<dbReference type="EMBL" id="CR858108">
    <property type="protein sequence ID" value="CAH90347.1"/>
    <property type="molecule type" value="mRNA"/>
</dbReference>
<dbReference type="RefSeq" id="NP_001126745.1">
    <molecule id="Q5R5K6-1"/>
    <property type="nucleotide sequence ID" value="NM_001133273.1"/>
</dbReference>
<dbReference type="SMR" id="Q5R5K6"/>
<dbReference type="FunCoup" id="Q5R5K6">
    <property type="interactions" value="160"/>
</dbReference>
<dbReference type="Ensembl" id="ENSPPYT00000014348.2">
    <molecule id="Q5R5K6-1"/>
    <property type="protein sequence ID" value="ENSPPYP00000013789.1"/>
    <property type="gene ID" value="ENSPPYG00000012366.3"/>
</dbReference>
<dbReference type="Ensembl" id="ENSPPYT00000036946.1">
    <molecule id="Q5R5K6-2"/>
    <property type="protein sequence ID" value="ENSPPYP00000031062.1"/>
    <property type="gene ID" value="ENSPPYG00000012366.3"/>
</dbReference>
<dbReference type="GeneID" id="100173747"/>
<dbReference type="KEGG" id="pon:100173747"/>
<dbReference type="CTD" id="29094"/>
<dbReference type="eggNOG" id="KOG3587">
    <property type="taxonomic scope" value="Eukaryota"/>
</dbReference>
<dbReference type="GeneTree" id="ENSGT00940000155337"/>
<dbReference type="HOGENOM" id="CLU_037794_2_1_1"/>
<dbReference type="InParanoid" id="Q5R5K6"/>
<dbReference type="OMA" id="CISGEKG"/>
<dbReference type="OrthoDB" id="9857238at2759"/>
<dbReference type="TreeFam" id="TF315551"/>
<dbReference type="Proteomes" id="UP000001595">
    <property type="component" value="Chromosome 2A"/>
</dbReference>
<dbReference type="GO" id="GO:0030246">
    <property type="term" value="F:carbohydrate binding"/>
    <property type="evidence" value="ECO:0007669"/>
    <property type="project" value="UniProtKB-KW"/>
</dbReference>
<dbReference type="CDD" id="cd00070">
    <property type="entry name" value="GLECT"/>
    <property type="match status" value="1"/>
</dbReference>
<dbReference type="FunFam" id="2.60.120.200:FF:000046">
    <property type="entry name" value="Galectin"/>
    <property type="match status" value="1"/>
</dbReference>
<dbReference type="Gene3D" id="2.60.120.200">
    <property type="match status" value="1"/>
</dbReference>
<dbReference type="InterPro" id="IPR013320">
    <property type="entry name" value="ConA-like_dom_sf"/>
</dbReference>
<dbReference type="InterPro" id="IPR044156">
    <property type="entry name" value="Galectin-like"/>
</dbReference>
<dbReference type="InterPro" id="IPR001079">
    <property type="entry name" value="Galectin_CRD"/>
</dbReference>
<dbReference type="PANTHER" id="PTHR11346">
    <property type="entry name" value="GALECTIN"/>
    <property type="match status" value="1"/>
</dbReference>
<dbReference type="PANTHER" id="PTHR11346:SF98">
    <property type="entry name" value="GALECTIN-RELATED PROTEIN"/>
    <property type="match status" value="1"/>
</dbReference>
<dbReference type="Pfam" id="PF00337">
    <property type="entry name" value="Gal-bind_lectin"/>
    <property type="match status" value="1"/>
</dbReference>
<dbReference type="SMART" id="SM00908">
    <property type="entry name" value="Gal-bind_lectin"/>
    <property type="match status" value="1"/>
</dbReference>
<dbReference type="SMART" id="SM00276">
    <property type="entry name" value="GLECT"/>
    <property type="match status" value="1"/>
</dbReference>
<dbReference type="SUPFAM" id="SSF49899">
    <property type="entry name" value="Concanavalin A-like lectins/glucanases"/>
    <property type="match status" value="1"/>
</dbReference>
<dbReference type="PROSITE" id="PS51304">
    <property type="entry name" value="GALECTIN"/>
    <property type="match status" value="1"/>
</dbReference>
<comment type="function">
    <text evidence="1">Does not bind lactose, and may not bind carbohydrates.</text>
</comment>
<comment type="subunit">
    <text evidence="1">Monomer.</text>
</comment>
<comment type="alternative products">
    <event type="alternative splicing"/>
    <isoform>
        <id>Q5R5K6-1</id>
        <name>1</name>
        <sequence type="displayed"/>
    </isoform>
    <isoform>
        <id>Q5R5K6-2</id>
        <name>2</name>
        <sequence type="described" ref="VSP_030697"/>
    </isoform>
</comment>
<comment type="caution">
    <text evidence="5">Most of the residues in the galectin domain that have been shown to be critical for carbohydrate-binding in other galectins are not conserved.</text>
</comment>
<gene>
    <name type="primary">LGALSL</name>
    <name type="synonym">GRP</name>
</gene>
<protein>
    <recommendedName>
        <fullName>Galectin-related protein</fullName>
    </recommendedName>
    <alternativeName>
        <fullName>Lectin galactoside-binding-like protein</fullName>
    </alternativeName>
</protein>
<accession>Q5R5K6</accession>
<accession>Q5RD10</accession>
<reference key="1">
    <citation type="submission" date="2004-11" db="EMBL/GenBank/DDBJ databases">
        <authorList>
            <consortium name="The German cDNA consortium"/>
        </authorList>
    </citation>
    <scope>NUCLEOTIDE SEQUENCE [LARGE SCALE MRNA] (ISOFORMS 1 AND 2)</scope>
    <source>
        <tissue>Heart</tissue>
        <tissue>Kidney</tissue>
    </source>
</reference>
<feature type="initiator methionine" description="Removed" evidence="2">
    <location>
        <position position="1"/>
    </location>
</feature>
<feature type="chain" id="PRO_0000315769" description="Galectin-related protein">
    <location>
        <begin position="2"/>
        <end position="172"/>
    </location>
</feature>
<feature type="domain" description="Galectin" evidence="3">
    <location>
        <begin position="39"/>
        <end position="168"/>
    </location>
</feature>
<feature type="modified residue" description="N-acetylalanine" evidence="2">
    <location>
        <position position="2"/>
    </location>
</feature>
<feature type="modified residue" description="Phosphoserine" evidence="2">
    <location>
        <position position="22"/>
    </location>
</feature>
<feature type="modified residue" description="Phosphoserine" evidence="2">
    <location>
        <position position="25"/>
    </location>
</feature>
<feature type="splice variant" id="VSP_030697" description="In isoform 2." evidence="4">
    <original>SFAISLTCGDSEDPPADVAIELKAVFTDRQLLRNSCISGERGEEQSAIPYFPFIPDQPFRVEILCEHPRFRVFVDGHQLFDFYHRIQTLSAIDTIKINGDLQITKLG</original>
    <variation>RWKFFVSTHVSECLWMDTNFLIFTIAFKRYLQLTP</variation>
    <location>
        <begin position="66"/>
        <end position="172"/>
    </location>
</feature>
<evidence type="ECO:0000250" key="1"/>
<evidence type="ECO:0000250" key="2">
    <source>
        <dbReference type="UniProtKB" id="Q3ZCW2"/>
    </source>
</evidence>
<evidence type="ECO:0000255" key="3">
    <source>
        <dbReference type="PROSITE-ProRule" id="PRU00639"/>
    </source>
</evidence>
<evidence type="ECO:0000303" key="4">
    <source ref="1"/>
</evidence>
<evidence type="ECO:0000305" key="5"/>
<keyword id="KW-0007">Acetylation</keyword>
<keyword id="KW-0025">Alternative splicing</keyword>
<keyword id="KW-0430">Lectin</keyword>
<keyword id="KW-0597">Phosphoprotein</keyword>
<keyword id="KW-1185">Reference proteome</keyword>
<organism>
    <name type="scientific">Pongo abelii</name>
    <name type="common">Sumatran orangutan</name>
    <name type="synonym">Pongo pygmaeus abelii</name>
    <dbReference type="NCBI Taxonomy" id="9601"/>
    <lineage>
        <taxon>Eukaryota</taxon>
        <taxon>Metazoa</taxon>
        <taxon>Chordata</taxon>
        <taxon>Craniata</taxon>
        <taxon>Vertebrata</taxon>
        <taxon>Euteleostomi</taxon>
        <taxon>Mammalia</taxon>
        <taxon>Eutheria</taxon>
        <taxon>Euarchontoglires</taxon>
        <taxon>Primates</taxon>
        <taxon>Haplorrhini</taxon>
        <taxon>Catarrhini</taxon>
        <taxon>Hominidae</taxon>
        <taxon>Pongo</taxon>
    </lineage>
</organism>